<organism evidence="7">
    <name type="scientific">Caenorhabditis elegans</name>
    <dbReference type="NCBI Taxonomy" id="6239"/>
    <lineage>
        <taxon>Eukaryota</taxon>
        <taxon>Metazoa</taxon>
        <taxon>Ecdysozoa</taxon>
        <taxon>Nematoda</taxon>
        <taxon>Chromadorea</taxon>
        <taxon>Rhabditida</taxon>
        <taxon>Rhabditina</taxon>
        <taxon>Rhabditomorpha</taxon>
        <taxon>Rhabditoidea</taxon>
        <taxon>Rhabditidae</taxon>
        <taxon>Peloderinae</taxon>
        <taxon>Caenorhabditis</taxon>
    </lineage>
</organism>
<protein>
    <recommendedName>
        <fullName evidence="5">Neuroligin-like protein glit-1</fullName>
    </recommendedName>
    <alternativeName>
        <fullName evidence="6">Gliotactin homolog</fullName>
    </alternativeName>
    <alternativeName>
        <fullName evidence="5">Inactive esterase glit-1</fullName>
    </alternativeName>
</protein>
<reference evidence="7" key="1">
    <citation type="journal article" date="1998" name="Science">
        <title>Genome sequence of the nematode C. elegans: a platform for investigating biology.</title>
        <authorList>
            <consortium name="The C. elegans sequencing consortium"/>
        </authorList>
    </citation>
    <scope>NUCLEOTIDE SEQUENCE [LARGE SCALE GENOMIC DNA]</scope>
    <source>
        <strain evidence="7">Bristol N2</strain>
    </source>
</reference>
<reference evidence="5" key="2">
    <citation type="journal article" date="2018" name="PLoS Genet.">
        <title>Mutations in Caenorhabditis elegans neuroligin-like glit-1, the apoptosis pathway and the calcium chaperone crt-1 increase dopaminergic neurodegeneration after 6-OHDA treatment.</title>
        <authorList>
            <person name="Offenburger S.L."/>
            <person name="Jongsma E."/>
            <person name="Gartner A."/>
        </authorList>
    </citation>
    <scope>FUNCTION</scope>
    <scope>TISSUE SPECIFICITY</scope>
    <scope>DEVELOPMENTAL STAGE</scope>
    <scope>MUTAGENESIS OF PRO-113</scope>
</reference>
<evidence type="ECO:0000255" key="1"/>
<evidence type="ECO:0000255" key="2">
    <source>
        <dbReference type="PROSITE-ProRule" id="PRU00498"/>
    </source>
</evidence>
<evidence type="ECO:0000269" key="3">
    <source>
    </source>
</evidence>
<evidence type="ECO:0000303" key="4">
    <source>
    </source>
</evidence>
<evidence type="ECO:0000305" key="5"/>
<evidence type="ECO:0000305" key="6">
    <source>
    </source>
</evidence>
<evidence type="ECO:0000312" key="7">
    <source>
        <dbReference type="Proteomes" id="UP000001940"/>
    </source>
</evidence>
<evidence type="ECO:0000312" key="8">
    <source>
        <dbReference type="WormBase" id="F55D10.3"/>
    </source>
</evidence>
<feature type="signal peptide" evidence="1">
    <location>
        <begin position="1"/>
        <end position="18"/>
    </location>
</feature>
<feature type="chain" id="PRO_5004199260" description="Neuroligin-like protein glit-1" evidence="1">
    <location>
        <begin position="19"/>
        <end position="730"/>
    </location>
</feature>
<feature type="topological domain" description="Extracellular" evidence="5">
    <location>
        <begin position="19"/>
        <end position="663"/>
    </location>
</feature>
<feature type="transmembrane region" description="Helical" evidence="1">
    <location>
        <begin position="664"/>
        <end position="684"/>
    </location>
</feature>
<feature type="topological domain" description="Cytoplasmic" evidence="5">
    <location>
        <begin position="685"/>
        <end position="730"/>
    </location>
</feature>
<feature type="glycosylation site" description="N-linked (GlcNAc...) asparagine" evidence="2">
    <location>
        <position position="103"/>
    </location>
</feature>
<feature type="glycosylation site" description="N-linked (GlcNAc...) asparagine" evidence="2">
    <location>
        <position position="320"/>
    </location>
</feature>
<feature type="glycosylation site" description="N-linked (GlcNAc...) asparagine" evidence="2">
    <location>
        <position position="445"/>
    </location>
</feature>
<feature type="glycosylation site" description="N-linked (GlcNAc...) asparagine" evidence="2">
    <location>
        <position position="512"/>
    </location>
</feature>
<feature type="glycosylation site" description="N-linked (GlcNAc...) asparagine" evidence="2">
    <location>
        <position position="557"/>
    </location>
</feature>
<feature type="glycosylation site" description="N-linked (GlcNAc...) asparagine" evidence="2">
    <location>
        <position position="564"/>
    </location>
</feature>
<feature type="glycosylation site" description="N-linked (GlcNAc...) asparagine" evidence="2">
    <location>
        <position position="604"/>
    </location>
</feature>
<feature type="mutagenesis site" description="In gt1981; in larvae, enhances neurodegeneration of CEP and DEP dopaminergic neurons induced by the oxidative stress agent 6-hydroxydopamine (6-OHDA). Increases expression of oxidative stress genes in response to paraquat and hydrogen peroxide. Increases paralysis induced by high dopamine levels. No defect in dopamine signaling and intestinal permeability. Reduced lifespan and slower development in response to oxidative agent paraquat." evidence="3">
    <original>P</original>
    <variation>L</variation>
    <location>
        <position position="113"/>
    </location>
</feature>
<comment type="function">
    <text evidence="3 5">Probable neuronal cell surface protein thought to be involved in cell-cell-interactions (Probable). Confers protection against oxidative stress (PubMed:29346364). Plays a role in protecting dopaminergic neurons against oxidative stress-induced neurodegeneration (PubMed:29346364).</text>
</comment>
<comment type="subcellular location">
    <subcellularLocation>
        <location evidence="5">Cell membrane</location>
        <topology evidence="1">Single-pass type I membrane protein</topology>
    </subcellularLocation>
</comment>
<comment type="tissue specificity">
    <text evidence="3">Expressed in the pharynx, intestine, and in several cells in the head including dopaminergic neurons.</text>
</comment>
<comment type="developmental stage">
    <text evidence="3">Expressed in larvae and adults. Expressed in dopaminergic neurons in L4 larvae.</text>
</comment>
<comment type="similarity">
    <text evidence="5">Belongs to the type-B carboxylesterase/lipase family.</text>
</comment>
<comment type="caution">
    <text evidence="6">Although glit-1 contains an extracellular carboxylesterase-like domain, the characteristic Ser-Glu-His catalytic triad present in acetylcholinesterase is replaced by two Asp residues and an Arg, suggesting that glit-1 lacks catalytic activity.</text>
</comment>
<proteinExistence type="evidence at protein level"/>
<accession>Q20826</accession>
<gene>
    <name evidence="4 8" type="primary">glit-1</name>
    <name evidence="8" type="ORF">F55D10.3</name>
</gene>
<keyword id="KW-1003">Cell membrane</keyword>
<keyword id="KW-0325">Glycoprotein</keyword>
<keyword id="KW-0472">Membrane</keyword>
<keyword id="KW-1185">Reference proteome</keyword>
<keyword id="KW-0732">Signal</keyword>
<keyword id="KW-0812">Transmembrane</keyword>
<keyword id="KW-1133">Transmembrane helix</keyword>
<dbReference type="EMBL" id="BX284606">
    <property type="protein sequence ID" value="CCD67089.1"/>
    <property type="molecule type" value="Genomic_DNA"/>
</dbReference>
<dbReference type="PIR" id="T16455">
    <property type="entry name" value="T16455"/>
</dbReference>
<dbReference type="RefSeq" id="NP_508807.1">
    <property type="nucleotide sequence ID" value="NM_076406.8"/>
</dbReference>
<dbReference type="SMR" id="Q20826"/>
<dbReference type="FunCoup" id="Q20826">
    <property type="interactions" value="266"/>
</dbReference>
<dbReference type="STRING" id="6239.F55D10.3.1"/>
<dbReference type="ESTHER" id="caeel-f55d10.3">
    <property type="family name" value="Gliotactin"/>
</dbReference>
<dbReference type="GlyCosmos" id="Q20826">
    <property type="glycosylation" value="7 sites, No reported glycans"/>
</dbReference>
<dbReference type="PaxDb" id="6239-F55D10.3"/>
<dbReference type="PeptideAtlas" id="Q20826"/>
<dbReference type="EnsemblMetazoa" id="F55D10.3.1">
    <property type="protein sequence ID" value="F55D10.3.1"/>
    <property type="gene ID" value="WBGene00018878"/>
</dbReference>
<dbReference type="GeneID" id="180747"/>
<dbReference type="KEGG" id="cel:CELE_F55D10.3"/>
<dbReference type="UCSC" id="F55D10.3">
    <property type="organism name" value="c. elegans"/>
</dbReference>
<dbReference type="AGR" id="WB:WBGene00018878"/>
<dbReference type="CTD" id="180747"/>
<dbReference type="WormBase" id="F55D10.3">
    <property type="protein sequence ID" value="CE04659"/>
    <property type="gene ID" value="WBGene00018878"/>
    <property type="gene designation" value="glit-1"/>
</dbReference>
<dbReference type="eggNOG" id="KOG1516">
    <property type="taxonomic scope" value="Eukaryota"/>
</dbReference>
<dbReference type="HOGENOM" id="CLU_380016_0_0_1"/>
<dbReference type="InParanoid" id="Q20826"/>
<dbReference type="OMA" id="HYQPNGF"/>
<dbReference type="OrthoDB" id="408631at2759"/>
<dbReference type="PhylomeDB" id="Q20826"/>
<dbReference type="Reactome" id="R-CEL-6794361">
    <property type="pathway name" value="Neurexins and neuroligins"/>
</dbReference>
<dbReference type="PRO" id="PR:Q20826"/>
<dbReference type="Proteomes" id="UP000001940">
    <property type="component" value="Chromosome X"/>
</dbReference>
<dbReference type="Bgee" id="WBGene00018878">
    <property type="expression patterns" value="Expressed in pharyngeal muscle cell (C elegans) and 3 other cell types or tissues"/>
</dbReference>
<dbReference type="GO" id="GO:0005886">
    <property type="term" value="C:plasma membrane"/>
    <property type="evidence" value="ECO:0007669"/>
    <property type="project" value="UniProtKB-SubCell"/>
</dbReference>
<dbReference type="GO" id="GO:0072756">
    <property type="term" value="P:cellular response to paraquat"/>
    <property type="evidence" value="ECO:0000315"/>
    <property type="project" value="UniProtKB"/>
</dbReference>
<dbReference type="GO" id="GO:1902883">
    <property type="term" value="P:negative regulation of response to oxidative stress"/>
    <property type="evidence" value="ECO:0000315"/>
    <property type="project" value="UniProtKB"/>
</dbReference>
<dbReference type="Gene3D" id="3.40.50.1820">
    <property type="entry name" value="alpha/beta hydrolase"/>
    <property type="match status" value="1"/>
</dbReference>
<dbReference type="InterPro" id="IPR029058">
    <property type="entry name" value="AB_hydrolase_fold"/>
</dbReference>
<dbReference type="InterPro" id="IPR002018">
    <property type="entry name" value="CarbesteraseB"/>
</dbReference>
<dbReference type="InterPro" id="IPR019819">
    <property type="entry name" value="Carboxylesterase_B_CS"/>
</dbReference>
<dbReference type="InterPro" id="IPR051093">
    <property type="entry name" value="Neuroligin/BSAL"/>
</dbReference>
<dbReference type="PANTHER" id="PTHR43903">
    <property type="entry name" value="NEUROLIGIN"/>
    <property type="match status" value="1"/>
</dbReference>
<dbReference type="Pfam" id="PF00135">
    <property type="entry name" value="COesterase"/>
    <property type="match status" value="1"/>
</dbReference>
<dbReference type="SUPFAM" id="SSF53474">
    <property type="entry name" value="alpha/beta-Hydrolases"/>
    <property type="match status" value="1"/>
</dbReference>
<dbReference type="PROSITE" id="PS00941">
    <property type="entry name" value="CARBOXYLESTERASE_B_2"/>
    <property type="match status" value="1"/>
</dbReference>
<sequence length="730" mass="82993">MFTGTIFNSLFTLPLVISQFVPPPTRPVDLWDPFKTTTTPFPHGGVNQGLNRDEVVVRLPLGDIVGKEVHLHNLPWTIHKDPTEELPKDGTHFDPNPLKPKNNITVFTFLGVPYAEPPTSQRRFKPPQQLTVFPGKQPYLAFNYAASCAQDVEKSPSPFVDHPYPFMVDEDCLYLNIFSPDISKNAQTTYPVIVFFHGGNFQTGSANEWPAHGLASRGMVVVTVNYRLGAFGFMSMGDSETGNYGLQDQRLALEFVKNNIVTFGGDPQAVTVVGHDAGAASIGFHMQSPYSRHLFRSAATMSGAEVSYHSYIGKTALAFNNTMKLGRYAGCTQAVAQHRWDCILTRSTGDIIDATRNIPIEYNRYLFMPTVDGKYLPGNPLWTLVNAPSGETSIMSPVPMLIGMNAQDGSEVVLEDRRLGEFSQFNDVDHEYLKSYSLEYCYRHNYSMNREATADAILSKYTFWPDRAAAWAIKENFIQFATDAYYTAPMQLSSHLHSSSGSRVFQYVNNYNFSRQHPNLLFIPDWMGVCRDCDLYLMFGYPFLPDELRPIGLRGINFTDTDRNASRTFSNIIRRFSYHQNPNFQFDGSWAAYEPRRHWYINFNYTHEEDWKIPGTLARDYRYQDVAFWNEYIPALVNYMTTTFSPENVAYRREIMVFKWITGVNVIIIALLIVLAGAFGYMVWGNKEDEEAAYKAENHQLVEYRDTGHSVSDATISSRTRSPRSRITNL</sequence>
<name>GLIT1_CAEEL</name>